<name>TRPA_SYNWW</name>
<protein>
    <recommendedName>
        <fullName evidence="1">Tryptophan synthase alpha chain</fullName>
        <ecNumber evidence="1">4.2.1.20</ecNumber>
    </recommendedName>
</protein>
<keyword id="KW-0028">Amino-acid biosynthesis</keyword>
<keyword id="KW-0057">Aromatic amino acid biosynthesis</keyword>
<keyword id="KW-0456">Lyase</keyword>
<keyword id="KW-1185">Reference proteome</keyword>
<keyword id="KW-0822">Tryptophan biosynthesis</keyword>
<reference key="1">
    <citation type="journal article" date="2010" name="Environ. Microbiol.">
        <title>The genome of Syntrophomonas wolfei: new insights into syntrophic metabolism and biohydrogen production.</title>
        <authorList>
            <person name="Sieber J.R."/>
            <person name="Sims D.R."/>
            <person name="Han C."/>
            <person name="Kim E."/>
            <person name="Lykidis A."/>
            <person name="Lapidus A.L."/>
            <person name="McDonnald E."/>
            <person name="Rohlin L."/>
            <person name="Culley D.E."/>
            <person name="Gunsalus R."/>
            <person name="McInerney M.J."/>
        </authorList>
    </citation>
    <scope>NUCLEOTIDE SEQUENCE [LARGE SCALE GENOMIC DNA]</scope>
    <source>
        <strain>DSM 2245B / Goettingen</strain>
    </source>
</reference>
<evidence type="ECO:0000255" key="1">
    <source>
        <dbReference type="HAMAP-Rule" id="MF_00131"/>
    </source>
</evidence>
<accession>Q0B002</accession>
<gene>
    <name evidence="1" type="primary">trpA</name>
    <name type="ordered locus">Swol_0362</name>
</gene>
<dbReference type="EC" id="4.2.1.20" evidence="1"/>
<dbReference type="EMBL" id="CP000448">
    <property type="protein sequence ID" value="ABI67702.1"/>
    <property type="molecule type" value="Genomic_DNA"/>
</dbReference>
<dbReference type="RefSeq" id="WP_011639810.1">
    <property type="nucleotide sequence ID" value="NC_008346.1"/>
</dbReference>
<dbReference type="SMR" id="Q0B002"/>
<dbReference type="STRING" id="335541.Swol_0362"/>
<dbReference type="KEGG" id="swo:Swol_0362"/>
<dbReference type="eggNOG" id="COG0159">
    <property type="taxonomic scope" value="Bacteria"/>
</dbReference>
<dbReference type="HOGENOM" id="CLU_016734_0_0_9"/>
<dbReference type="UniPathway" id="UPA00035">
    <property type="reaction ID" value="UER00044"/>
</dbReference>
<dbReference type="Proteomes" id="UP000001968">
    <property type="component" value="Chromosome"/>
</dbReference>
<dbReference type="GO" id="GO:0005829">
    <property type="term" value="C:cytosol"/>
    <property type="evidence" value="ECO:0007669"/>
    <property type="project" value="TreeGrafter"/>
</dbReference>
<dbReference type="GO" id="GO:0004834">
    <property type="term" value="F:tryptophan synthase activity"/>
    <property type="evidence" value="ECO:0007669"/>
    <property type="project" value="UniProtKB-UniRule"/>
</dbReference>
<dbReference type="CDD" id="cd04724">
    <property type="entry name" value="Tryptophan_synthase_alpha"/>
    <property type="match status" value="1"/>
</dbReference>
<dbReference type="Gene3D" id="3.20.20.70">
    <property type="entry name" value="Aldolase class I"/>
    <property type="match status" value="1"/>
</dbReference>
<dbReference type="HAMAP" id="MF_00131">
    <property type="entry name" value="Trp_synth_alpha"/>
    <property type="match status" value="1"/>
</dbReference>
<dbReference type="InterPro" id="IPR013785">
    <property type="entry name" value="Aldolase_TIM"/>
</dbReference>
<dbReference type="InterPro" id="IPR011060">
    <property type="entry name" value="RibuloseP-bd_barrel"/>
</dbReference>
<dbReference type="InterPro" id="IPR018204">
    <property type="entry name" value="Trp_synthase_alpha_AS"/>
</dbReference>
<dbReference type="InterPro" id="IPR002028">
    <property type="entry name" value="Trp_synthase_suA"/>
</dbReference>
<dbReference type="NCBIfam" id="TIGR00262">
    <property type="entry name" value="trpA"/>
    <property type="match status" value="1"/>
</dbReference>
<dbReference type="PANTHER" id="PTHR43406:SF1">
    <property type="entry name" value="TRYPTOPHAN SYNTHASE ALPHA CHAIN, CHLOROPLASTIC"/>
    <property type="match status" value="1"/>
</dbReference>
<dbReference type="PANTHER" id="PTHR43406">
    <property type="entry name" value="TRYPTOPHAN SYNTHASE, ALPHA CHAIN"/>
    <property type="match status" value="1"/>
</dbReference>
<dbReference type="Pfam" id="PF00290">
    <property type="entry name" value="Trp_syntA"/>
    <property type="match status" value="1"/>
</dbReference>
<dbReference type="SUPFAM" id="SSF51366">
    <property type="entry name" value="Ribulose-phoshate binding barrel"/>
    <property type="match status" value="1"/>
</dbReference>
<dbReference type="PROSITE" id="PS00167">
    <property type="entry name" value="TRP_SYNTHASE_ALPHA"/>
    <property type="match status" value="1"/>
</dbReference>
<proteinExistence type="inferred from homology"/>
<organism>
    <name type="scientific">Syntrophomonas wolfei subsp. wolfei (strain DSM 2245B / Goettingen)</name>
    <dbReference type="NCBI Taxonomy" id="335541"/>
    <lineage>
        <taxon>Bacteria</taxon>
        <taxon>Bacillati</taxon>
        <taxon>Bacillota</taxon>
        <taxon>Clostridia</taxon>
        <taxon>Eubacteriales</taxon>
        <taxon>Syntrophomonadaceae</taxon>
        <taxon>Syntrophomonas</taxon>
    </lineage>
</organism>
<sequence length="259" mass="28417">MEIRNRLAQLREKEEMALIAFIMAAVPDEDLCLDCIRALEQGGCDLLELGVPFTDPLADGEVIERFHHWGVRLGLNLKRGLDFAARVRAACQLPLILFSYYNPILQMGLDRFAGDCRSAGVDAVIVPDLPLDELGRLAGQGLELIPMLAPSSTLSRIQMAADLDPAFIYCVSVRGVTGVRSLPEMEIKDYLQKVRRVSTAPLALGFGISQPEQVRAFRGQADGVVIGSALAQIIEEYESRPALLPGMLEKRCQALKLLS</sequence>
<feature type="chain" id="PRO_1000198730" description="Tryptophan synthase alpha chain">
    <location>
        <begin position="1"/>
        <end position="259"/>
    </location>
</feature>
<feature type="active site" description="Proton acceptor" evidence="1">
    <location>
        <position position="48"/>
    </location>
</feature>
<feature type="active site" description="Proton acceptor" evidence="1">
    <location>
        <position position="59"/>
    </location>
</feature>
<comment type="function">
    <text evidence="1">The alpha subunit is responsible for the aldol cleavage of indoleglycerol phosphate to indole and glyceraldehyde 3-phosphate.</text>
</comment>
<comment type="catalytic activity">
    <reaction evidence="1">
        <text>(1S,2R)-1-C-(indol-3-yl)glycerol 3-phosphate + L-serine = D-glyceraldehyde 3-phosphate + L-tryptophan + H2O</text>
        <dbReference type="Rhea" id="RHEA:10532"/>
        <dbReference type="ChEBI" id="CHEBI:15377"/>
        <dbReference type="ChEBI" id="CHEBI:33384"/>
        <dbReference type="ChEBI" id="CHEBI:57912"/>
        <dbReference type="ChEBI" id="CHEBI:58866"/>
        <dbReference type="ChEBI" id="CHEBI:59776"/>
        <dbReference type="EC" id="4.2.1.20"/>
    </reaction>
</comment>
<comment type="pathway">
    <text evidence="1">Amino-acid biosynthesis; L-tryptophan biosynthesis; L-tryptophan from chorismate: step 5/5.</text>
</comment>
<comment type="subunit">
    <text evidence="1">Tetramer of two alpha and two beta chains.</text>
</comment>
<comment type="similarity">
    <text evidence="1">Belongs to the TrpA family.</text>
</comment>